<name>GCS2_BRASO</name>
<feature type="chain" id="PRO_0000323502" description="Putative glutamate--cysteine ligase 2">
    <location>
        <begin position="1"/>
        <end position="408"/>
    </location>
</feature>
<dbReference type="EC" id="6.3.2.2" evidence="1"/>
<dbReference type="EMBL" id="CU234118">
    <property type="protein sequence ID" value="CAL74780.1"/>
    <property type="status" value="ALT_INIT"/>
    <property type="molecule type" value="Genomic_DNA"/>
</dbReference>
<dbReference type="RefSeq" id="WP_011924033.1">
    <property type="nucleotide sequence ID" value="NC_009445.1"/>
</dbReference>
<dbReference type="SMR" id="A4YLK4"/>
<dbReference type="STRING" id="114615.BRADO0861"/>
<dbReference type="KEGG" id="bra:BRADO0861"/>
<dbReference type="eggNOG" id="COG2170">
    <property type="taxonomic scope" value="Bacteria"/>
</dbReference>
<dbReference type="HOGENOM" id="CLU_044848_0_1_5"/>
<dbReference type="OrthoDB" id="9769628at2"/>
<dbReference type="Proteomes" id="UP000001994">
    <property type="component" value="Chromosome"/>
</dbReference>
<dbReference type="GO" id="GO:0005524">
    <property type="term" value="F:ATP binding"/>
    <property type="evidence" value="ECO:0007669"/>
    <property type="project" value="UniProtKB-KW"/>
</dbReference>
<dbReference type="GO" id="GO:0004357">
    <property type="term" value="F:glutamate-cysteine ligase activity"/>
    <property type="evidence" value="ECO:0007669"/>
    <property type="project" value="UniProtKB-EC"/>
</dbReference>
<dbReference type="GO" id="GO:0042398">
    <property type="term" value="P:modified amino acid biosynthetic process"/>
    <property type="evidence" value="ECO:0007669"/>
    <property type="project" value="InterPro"/>
</dbReference>
<dbReference type="Gene3D" id="3.30.590.20">
    <property type="match status" value="1"/>
</dbReference>
<dbReference type="HAMAP" id="MF_01609">
    <property type="entry name" value="Glu_cys_ligase_2"/>
    <property type="match status" value="1"/>
</dbReference>
<dbReference type="InterPro" id="IPR050141">
    <property type="entry name" value="GCL_type2/YbdK_subfam"/>
</dbReference>
<dbReference type="InterPro" id="IPR006336">
    <property type="entry name" value="GCS2"/>
</dbReference>
<dbReference type="InterPro" id="IPR014746">
    <property type="entry name" value="Gln_synth/guanido_kin_cat_dom"/>
</dbReference>
<dbReference type="InterPro" id="IPR011793">
    <property type="entry name" value="YbdK"/>
</dbReference>
<dbReference type="NCBIfam" id="TIGR02050">
    <property type="entry name" value="gshA_cyan_rel"/>
    <property type="match status" value="1"/>
</dbReference>
<dbReference type="NCBIfam" id="NF010039">
    <property type="entry name" value="PRK13515.1"/>
    <property type="match status" value="1"/>
</dbReference>
<dbReference type="PANTHER" id="PTHR36510">
    <property type="entry name" value="GLUTAMATE--CYSTEINE LIGASE 2-RELATED"/>
    <property type="match status" value="1"/>
</dbReference>
<dbReference type="PANTHER" id="PTHR36510:SF1">
    <property type="entry name" value="GLUTAMATE--CYSTEINE LIGASE 2-RELATED"/>
    <property type="match status" value="1"/>
</dbReference>
<dbReference type="Pfam" id="PF04107">
    <property type="entry name" value="GCS2"/>
    <property type="match status" value="1"/>
</dbReference>
<dbReference type="SUPFAM" id="SSF55931">
    <property type="entry name" value="Glutamine synthetase/guanido kinase"/>
    <property type="match status" value="1"/>
</dbReference>
<proteinExistence type="inferred from homology"/>
<sequence>MDPKILERLRLGLSDDERRLVIRSATGGEEVTEYSFGIEEEYFLVDAKTLDVAIRTPDDLFDAANWSTGGQAMREMLQAQLEVATNVHVDVGDAREELKFLRREVASVAGQYGLTILACSTHPTALWRNSQPTPKPRYAEMMEDLRIVGQRNMLCGMHVHVQLPDPDRRFAVMRAMIPYIPVFIALSASSPFWNSRETGLKGYRLAAYDELPRTGLPELFTSKKQYDRYVAALTKSGVMPDESHVWWAMRPSLRHPTLELRAPDVCTAVDDAVAIASLYRALARHLYLNPELADAVGNVERAIAVENKWRAQRYGTDCLFVTEDGPVTGQEILNRTIADVAEHAEALGCLAEVERCRTIMQFGSSADYQLQAYRESGGQLAAVTQWIAAATVSRAEPPQSQPSVEPVR</sequence>
<reference key="1">
    <citation type="journal article" date="2007" name="Science">
        <title>Legumes symbioses: absence of nod genes in photosynthetic bradyrhizobia.</title>
        <authorList>
            <person name="Giraud E."/>
            <person name="Moulin L."/>
            <person name="Vallenet D."/>
            <person name="Barbe V."/>
            <person name="Cytryn E."/>
            <person name="Avarre J.-C."/>
            <person name="Jaubert M."/>
            <person name="Simon D."/>
            <person name="Cartieaux F."/>
            <person name="Prin Y."/>
            <person name="Bena G."/>
            <person name="Hannibal L."/>
            <person name="Fardoux J."/>
            <person name="Kojadinovic M."/>
            <person name="Vuillet L."/>
            <person name="Lajus A."/>
            <person name="Cruveiller S."/>
            <person name="Rouy Z."/>
            <person name="Mangenot S."/>
            <person name="Segurens B."/>
            <person name="Dossat C."/>
            <person name="Franck W.L."/>
            <person name="Chang W.-S."/>
            <person name="Saunders E."/>
            <person name="Bruce D."/>
            <person name="Richardson P."/>
            <person name="Normand P."/>
            <person name="Dreyfus B."/>
            <person name="Pignol D."/>
            <person name="Stacey G."/>
            <person name="Emerich D."/>
            <person name="Vermeglio A."/>
            <person name="Medigue C."/>
            <person name="Sadowsky M."/>
        </authorList>
    </citation>
    <scope>NUCLEOTIDE SEQUENCE [LARGE SCALE GENOMIC DNA]</scope>
    <source>
        <strain>ORS 278</strain>
    </source>
</reference>
<keyword id="KW-0067">ATP-binding</keyword>
<keyword id="KW-0436">Ligase</keyword>
<keyword id="KW-0547">Nucleotide-binding</keyword>
<keyword id="KW-1185">Reference proteome</keyword>
<comment type="function">
    <text evidence="1">ATP-dependent carboxylate-amine ligase which exhibits weak glutamate--cysteine ligase activity.</text>
</comment>
<comment type="catalytic activity">
    <reaction evidence="1">
        <text>L-cysteine + L-glutamate + ATP = gamma-L-glutamyl-L-cysteine + ADP + phosphate + H(+)</text>
        <dbReference type="Rhea" id="RHEA:13285"/>
        <dbReference type="ChEBI" id="CHEBI:15378"/>
        <dbReference type="ChEBI" id="CHEBI:29985"/>
        <dbReference type="ChEBI" id="CHEBI:30616"/>
        <dbReference type="ChEBI" id="CHEBI:35235"/>
        <dbReference type="ChEBI" id="CHEBI:43474"/>
        <dbReference type="ChEBI" id="CHEBI:58173"/>
        <dbReference type="ChEBI" id="CHEBI:456216"/>
        <dbReference type="EC" id="6.3.2.2"/>
    </reaction>
</comment>
<comment type="similarity">
    <text evidence="1">Belongs to the glutamate--cysteine ligase type 2 family. YbdK subfamily.</text>
</comment>
<comment type="sequence caution" evidence="2">
    <conflict type="erroneous initiation">
        <sequence resource="EMBL-CDS" id="CAL74780"/>
    </conflict>
</comment>
<accession>A4YLK4</accession>
<evidence type="ECO:0000255" key="1">
    <source>
        <dbReference type="HAMAP-Rule" id="MF_01609"/>
    </source>
</evidence>
<evidence type="ECO:0000305" key="2"/>
<organism>
    <name type="scientific">Bradyrhizobium sp. (strain ORS 278)</name>
    <dbReference type="NCBI Taxonomy" id="114615"/>
    <lineage>
        <taxon>Bacteria</taxon>
        <taxon>Pseudomonadati</taxon>
        <taxon>Pseudomonadota</taxon>
        <taxon>Alphaproteobacteria</taxon>
        <taxon>Hyphomicrobiales</taxon>
        <taxon>Nitrobacteraceae</taxon>
        <taxon>Bradyrhizobium</taxon>
    </lineage>
</organism>
<protein>
    <recommendedName>
        <fullName evidence="1">Putative glutamate--cysteine ligase 2</fullName>
        <ecNumber evidence="1">6.3.2.2</ecNumber>
    </recommendedName>
    <alternativeName>
        <fullName evidence="1">Gamma-glutamylcysteine synthetase 2</fullName>
        <shortName evidence="1">GCS 2</shortName>
        <shortName evidence="1">Gamma-GCS 2</shortName>
    </alternativeName>
</protein>
<gene>
    <name type="ordered locus">BRADO0861</name>
</gene>